<name>FTSB_VIBVU</name>
<protein>
    <recommendedName>
        <fullName evidence="1">Cell division protein FtsB</fullName>
    </recommendedName>
</protein>
<sequence length="93" mass="10908">MRLFILVLTLLFGWLQYTLWFGKNGVSDYYTIESDIEAQQLVNTKLQARNSEMYAEIDDLKQGLDAIEERARHELGMLKEGETFYRIVGEENQ</sequence>
<feature type="chain" id="PRO_0000214459" description="Cell division protein FtsB">
    <location>
        <begin position="1"/>
        <end position="93"/>
    </location>
</feature>
<feature type="topological domain" description="Cytoplasmic" evidence="1">
    <location>
        <begin position="1"/>
        <end position="3"/>
    </location>
</feature>
<feature type="transmembrane region" description="Helical" evidence="1">
    <location>
        <begin position="4"/>
        <end position="21"/>
    </location>
</feature>
<feature type="topological domain" description="Periplasmic" evidence="1">
    <location>
        <begin position="22"/>
        <end position="93"/>
    </location>
</feature>
<feature type="coiled-coil region" evidence="1">
    <location>
        <begin position="42"/>
        <end position="75"/>
    </location>
</feature>
<comment type="function">
    <text evidence="1">Essential cell division protein. May link together the upstream cell division proteins, which are predominantly cytoplasmic, with the downstream cell division proteins, which are predominantly periplasmic.</text>
</comment>
<comment type="subunit">
    <text evidence="1">Part of a complex composed of FtsB, FtsL and FtsQ.</text>
</comment>
<comment type="subcellular location">
    <subcellularLocation>
        <location evidence="1">Cell inner membrane</location>
        <topology evidence="1">Single-pass type II membrane protein</topology>
    </subcellularLocation>
    <text evidence="1">Localizes to the division septum.</text>
</comment>
<comment type="similarity">
    <text evidence="1">Belongs to the FtsB family.</text>
</comment>
<organism>
    <name type="scientific">Vibrio vulnificus (strain CMCP6)</name>
    <dbReference type="NCBI Taxonomy" id="216895"/>
    <lineage>
        <taxon>Bacteria</taxon>
        <taxon>Pseudomonadati</taxon>
        <taxon>Pseudomonadota</taxon>
        <taxon>Gammaproteobacteria</taxon>
        <taxon>Vibrionales</taxon>
        <taxon>Vibrionaceae</taxon>
        <taxon>Vibrio</taxon>
    </lineage>
</organism>
<proteinExistence type="inferred from homology"/>
<evidence type="ECO:0000255" key="1">
    <source>
        <dbReference type="HAMAP-Rule" id="MF_00599"/>
    </source>
</evidence>
<reference key="1">
    <citation type="submission" date="2002-12" db="EMBL/GenBank/DDBJ databases">
        <title>Complete genome sequence of Vibrio vulnificus CMCP6.</title>
        <authorList>
            <person name="Rhee J.H."/>
            <person name="Kim S.Y."/>
            <person name="Chung S.S."/>
            <person name="Kim J.J."/>
            <person name="Moon Y.H."/>
            <person name="Jeong H."/>
            <person name="Choy H.E."/>
        </authorList>
    </citation>
    <scope>NUCLEOTIDE SEQUENCE [LARGE SCALE GENOMIC DNA]</scope>
    <source>
        <strain>CMCP6</strain>
    </source>
</reference>
<keyword id="KW-0131">Cell cycle</keyword>
<keyword id="KW-0132">Cell division</keyword>
<keyword id="KW-0997">Cell inner membrane</keyword>
<keyword id="KW-1003">Cell membrane</keyword>
<keyword id="KW-0175">Coiled coil</keyword>
<keyword id="KW-0472">Membrane</keyword>
<keyword id="KW-0812">Transmembrane</keyword>
<keyword id="KW-1133">Transmembrane helix</keyword>
<accession>Q8DC61</accession>
<dbReference type="EMBL" id="AE016795">
    <property type="protein sequence ID" value="AAO10004.1"/>
    <property type="molecule type" value="Genomic_DNA"/>
</dbReference>
<dbReference type="RefSeq" id="WP_011079514.1">
    <property type="nucleotide sequence ID" value="NC_004459.3"/>
</dbReference>
<dbReference type="SMR" id="Q8DC61"/>
<dbReference type="KEGG" id="vvu:VV1_1581"/>
<dbReference type="HOGENOM" id="CLU_134863_5_2_6"/>
<dbReference type="Proteomes" id="UP000002275">
    <property type="component" value="Chromosome 1"/>
</dbReference>
<dbReference type="GO" id="GO:0032153">
    <property type="term" value="C:cell division site"/>
    <property type="evidence" value="ECO:0007669"/>
    <property type="project" value="UniProtKB-UniRule"/>
</dbReference>
<dbReference type="GO" id="GO:0030428">
    <property type="term" value="C:cell septum"/>
    <property type="evidence" value="ECO:0007669"/>
    <property type="project" value="TreeGrafter"/>
</dbReference>
<dbReference type="GO" id="GO:0005886">
    <property type="term" value="C:plasma membrane"/>
    <property type="evidence" value="ECO:0007669"/>
    <property type="project" value="UniProtKB-SubCell"/>
</dbReference>
<dbReference type="GO" id="GO:0043093">
    <property type="term" value="P:FtsZ-dependent cytokinesis"/>
    <property type="evidence" value="ECO:0007669"/>
    <property type="project" value="UniProtKB-UniRule"/>
</dbReference>
<dbReference type="Gene3D" id="1.20.5.400">
    <property type="match status" value="1"/>
</dbReference>
<dbReference type="HAMAP" id="MF_00599">
    <property type="entry name" value="FtsB"/>
    <property type="match status" value="1"/>
</dbReference>
<dbReference type="InterPro" id="IPR023081">
    <property type="entry name" value="Cell_div_FtsB"/>
</dbReference>
<dbReference type="InterPro" id="IPR007060">
    <property type="entry name" value="FtsL/DivIC"/>
</dbReference>
<dbReference type="NCBIfam" id="NF002058">
    <property type="entry name" value="PRK00888.1"/>
    <property type="match status" value="1"/>
</dbReference>
<dbReference type="PANTHER" id="PTHR37485">
    <property type="entry name" value="CELL DIVISION PROTEIN FTSB"/>
    <property type="match status" value="1"/>
</dbReference>
<dbReference type="PANTHER" id="PTHR37485:SF1">
    <property type="entry name" value="CELL DIVISION PROTEIN FTSB"/>
    <property type="match status" value="1"/>
</dbReference>
<dbReference type="Pfam" id="PF04977">
    <property type="entry name" value="DivIC"/>
    <property type="match status" value="1"/>
</dbReference>
<gene>
    <name evidence="1" type="primary">ftsB</name>
    <name type="ordered locus">VV1_1581</name>
</gene>